<organism>
    <name type="scientific">Escherichia coli (strain 55989 / EAEC)</name>
    <dbReference type="NCBI Taxonomy" id="585055"/>
    <lineage>
        <taxon>Bacteria</taxon>
        <taxon>Pseudomonadati</taxon>
        <taxon>Pseudomonadota</taxon>
        <taxon>Gammaproteobacteria</taxon>
        <taxon>Enterobacterales</taxon>
        <taxon>Enterobacteriaceae</taxon>
        <taxon>Escherichia</taxon>
    </lineage>
</organism>
<comment type="function">
    <text evidence="1">Conversion of glycerol 3-phosphate to dihydroxyacetone. Uses fumarate or nitrate as electron acceptor.</text>
</comment>
<comment type="catalytic activity">
    <reaction evidence="1">
        <text>a quinone + sn-glycerol 3-phosphate = dihydroxyacetone phosphate + a quinol</text>
        <dbReference type="Rhea" id="RHEA:18977"/>
        <dbReference type="ChEBI" id="CHEBI:24646"/>
        <dbReference type="ChEBI" id="CHEBI:57597"/>
        <dbReference type="ChEBI" id="CHEBI:57642"/>
        <dbReference type="ChEBI" id="CHEBI:132124"/>
        <dbReference type="EC" id="1.1.5.3"/>
    </reaction>
</comment>
<comment type="cofactor">
    <cofactor evidence="1">
        <name>FMN</name>
        <dbReference type="ChEBI" id="CHEBI:58210"/>
    </cofactor>
</comment>
<comment type="pathway">
    <text evidence="1">Polyol metabolism; glycerol degradation via glycerol kinase pathway; glycerone phosphate from sn-glycerol 3-phosphate (anaerobic route): step 1/1.</text>
</comment>
<comment type="subunit">
    <text evidence="1">Composed of a catalytic GlpA/B dimer and of membrane bound GlpC.</text>
</comment>
<comment type="similarity">
    <text evidence="1">Belongs to the anaerobic G-3-P dehydrogenase subunit B family.</text>
</comment>
<sequence length="419" mass="45415">MRFDTVIMGGGLAGLLCGLQLQKHGLRCAIVTRGQSALHFSSGSLDLLSHLPDGQPVTDIHSGLESLRQQAPAHPYSLLEPQRVLDLACQAQALIAESGAQLQGSVELAHQRVTPLGTLRATWLSSPEVPVWPLPAKKICVVGISGLMDFQAHLAAASLRELDLSVETAEIELPELDVLRNNATEFRAVNIARFLDNEENWPLLLDALIPVANTCEMILMPACFGLADDKLWRWLNEKLPCSLMLLPTLPPSVLGIRLQNQLQRQFVRQGGVWMPGDEVKKVTCKNGVVNEIWTRNHADIPLRPRFAVLASGSFFSGGLVAERNGIREPILGLDVLQTATRGEWYKGDFFAPQPWQQFGVTTDETLRPSQAGQTIENLFAIGSVLGGFDPIAQGCGGGVCAVSALHAAQQIAQRAGGQQ</sequence>
<reference key="1">
    <citation type="journal article" date="2009" name="PLoS Genet.">
        <title>Organised genome dynamics in the Escherichia coli species results in highly diverse adaptive paths.</title>
        <authorList>
            <person name="Touchon M."/>
            <person name="Hoede C."/>
            <person name="Tenaillon O."/>
            <person name="Barbe V."/>
            <person name="Baeriswyl S."/>
            <person name="Bidet P."/>
            <person name="Bingen E."/>
            <person name="Bonacorsi S."/>
            <person name="Bouchier C."/>
            <person name="Bouvet O."/>
            <person name="Calteau A."/>
            <person name="Chiapello H."/>
            <person name="Clermont O."/>
            <person name="Cruveiller S."/>
            <person name="Danchin A."/>
            <person name="Diard M."/>
            <person name="Dossat C."/>
            <person name="Karoui M.E."/>
            <person name="Frapy E."/>
            <person name="Garry L."/>
            <person name="Ghigo J.M."/>
            <person name="Gilles A.M."/>
            <person name="Johnson J."/>
            <person name="Le Bouguenec C."/>
            <person name="Lescat M."/>
            <person name="Mangenot S."/>
            <person name="Martinez-Jehanne V."/>
            <person name="Matic I."/>
            <person name="Nassif X."/>
            <person name="Oztas S."/>
            <person name="Petit M.A."/>
            <person name="Pichon C."/>
            <person name="Rouy Z."/>
            <person name="Ruf C.S."/>
            <person name="Schneider D."/>
            <person name="Tourret J."/>
            <person name="Vacherie B."/>
            <person name="Vallenet D."/>
            <person name="Medigue C."/>
            <person name="Rocha E.P.C."/>
            <person name="Denamur E."/>
        </authorList>
    </citation>
    <scope>NUCLEOTIDE SEQUENCE [LARGE SCALE GENOMIC DNA]</scope>
    <source>
        <strain>55989 / EAEC</strain>
    </source>
</reference>
<name>GLPB_ECO55</name>
<evidence type="ECO:0000255" key="1">
    <source>
        <dbReference type="HAMAP-Rule" id="MF_00753"/>
    </source>
</evidence>
<dbReference type="EC" id="1.1.5.3" evidence="1"/>
<dbReference type="EMBL" id="CU928145">
    <property type="protein sequence ID" value="CAU98360.1"/>
    <property type="molecule type" value="Genomic_DNA"/>
</dbReference>
<dbReference type="RefSeq" id="WP_001209921.1">
    <property type="nucleotide sequence ID" value="NC_011748.1"/>
</dbReference>
<dbReference type="GeneID" id="93774932"/>
<dbReference type="KEGG" id="eck:EC55989_2491"/>
<dbReference type="HOGENOM" id="CLU_047793_0_0_6"/>
<dbReference type="UniPathway" id="UPA00618">
    <property type="reaction ID" value="UER00673"/>
</dbReference>
<dbReference type="Proteomes" id="UP000000746">
    <property type="component" value="Chromosome"/>
</dbReference>
<dbReference type="GO" id="GO:0009331">
    <property type="term" value="C:glycerol-3-phosphate dehydrogenase (FAD) complex"/>
    <property type="evidence" value="ECO:0007669"/>
    <property type="project" value="InterPro"/>
</dbReference>
<dbReference type="GO" id="GO:0004368">
    <property type="term" value="F:glycerol-3-phosphate dehydrogenase (quinone) activity"/>
    <property type="evidence" value="ECO:0007669"/>
    <property type="project" value="UniProtKB-UniRule"/>
</dbReference>
<dbReference type="GO" id="GO:0009061">
    <property type="term" value="P:anaerobic respiration"/>
    <property type="evidence" value="ECO:0007669"/>
    <property type="project" value="TreeGrafter"/>
</dbReference>
<dbReference type="GO" id="GO:0019563">
    <property type="term" value="P:glycerol catabolic process"/>
    <property type="evidence" value="ECO:0007669"/>
    <property type="project" value="UniProtKB-UniRule"/>
</dbReference>
<dbReference type="GO" id="GO:0046168">
    <property type="term" value="P:glycerol-3-phosphate catabolic process"/>
    <property type="evidence" value="ECO:0007669"/>
    <property type="project" value="TreeGrafter"/>
</dbReference>
<dbReference type="Gene3D" id="3.50.50.60">
    <property type="entry name" value="FAD/NAD(P)-binding domain"/>
    <property type="match status" value="1"/>
</dbReference>
<dbReference type="HAMAP" id="MF_00753">
    <property type="entry name" value="Glycerol3P_GlpB"/>
    <property type="match status" value="1"/>
</dbReference>
<dbReference type="InterPro" id="IPR003953">
    <property type="entry name" value="FAD-dep_OxRdtase_2_FAD-bd"/>
</dbReference>
<dbReference type="InterPro" id="IPR050315">
    <property type="entry name" value="FAD-oxidoreductase_2"/>
</dbReference>
<dbReference type="InterPro" id="IPR036188">
    <property type="entry name" value="FAD/NAD-bd_sf"/>
</dbReference>
<dbReference type="InterPro" id="IPR009158">
    <property type="entry name" value="G3P_DH_GlpB_su"/>
</dbReference>
<dbReference type="NCBIfam" id="TIGR03378">
    <property type="entry name" value="glycerol3P_GlpB"/>
    <property type="match status" value="1"/>
</dbReference>
<dbReference type="NCBIfam" id="NF003718">
    <property type="entry name" value="PRK05329.1-1"/>
    <property type="match status" value="1"/>
</dbReference>
<dbReference type="NCBIfam" id="NF003719">
    <property type="entry name" value="PRK05329.1-2"/>
    <property type="match status" value="1"/>
</dbReference>
<dbReference type="NCBIfam" id="NF003720">
    <property type="entry name" value="PRK05329.1-3"/>
    <property type="match status" value="1"/>
</dbReference>
<dbReference type="NCBIfam" id="NF003721">
    <property type="entry name" value="PRK05329.1-4"/>
    <property type="match status" value="1"/>
</dbReference>
<dbReference type="PANTHER" id="PTHR43400:SF11">
    <property type="entry name" value="ANAEROBIC GLYCEROL-3-PHOSPHATE DEHYDROGENASE SUBUNIT B"/>
    <property type="match status" value="1"/>
</dbReference>
<dbReference type="PANTHER" id="PTHR43400">
    <property type="entry name" value="FUMARATE REDUCTASE"/>
    <property type="match status" value="1"/>
</dbReference>
<dbReference type="Pfam" id="PF00890">
    <property type="entry name" value="FAD_binding_2"/>
    <property type="match status" value="1"/>
</dbReference>
<dbReference type="PIRSF" id="PIRSF000141">
    <property type="entry name" value="Anaerobic_G3P_dh"/>
    <property type="match status" value="1"/>
</dbReference>
<dbReference type="SUPFAM" id="SSF51905">
    <property type="entry name" value="FAD/NAD(P)-binding domain"/>
    <property type="match status" value="1"/>
</dbReference>
<protein>
    <recommendedName>
        <fullName evidence="1">Anaerobic glycerol-3-phosphate dehydrogenase subunit B</fullName>
        <shortName evidence="1">Anaerobic G-3-P dehydrogenase subunit B</shortName>
        <shortName evidence="1">Anaerobic G3Pdhase B</shortName>
        <ecNumber evidence="1">1.1.5.3</ecNumber>
    </recommendedName>
</protein>
<proteinExistence type="inferred from homology"/>
<feature type="chain" id="PRO_1000148358" description="Anaerobic glycerol-3-phosphate dehydrogenase subunit B">
    <location>
        <begin position="1"/>
        <end position="419"/>
    </location>
</feature>
<gene>
    <name evidence="1" type="primary">glpB</name>
    <name type="ordered locus">EC55989_2491</name>
</gene>
<keyword id="KW-0285">Flavoprotein</keyword>
<keyword id="KW-0288">FMN</keyword>
<keyword id="KW-0560">Oxidoreductase</keyword>
<keyword id="KW-1185">Reference proteome</keyword>
<accession>B7LAR0</accession>